<evidence type="ECO:0000250" key="1"/>
<evidence type="ECO:0000256" key="2">
    <source>
        <dbReference type="SAM" id="MobiDB-lite"/>
    </source>
</evidence>
<evidence type="ECO:0000269" key="3">
    <source>
    </source>
</evidence>
<evidence type="ECO:0000269" key="4">
    <source>
    </source>
</evidence>
<evidence type="ECO:0000303" key="5">
    <source>
    </source>
</evidence>
<evidence type="ECO:0000305" key="6"/>
<evidence type="ECO:0007744" key="7">
    <source>
    </source>
</evidence>
<evidence type="ECO:0007744" key="8">
    <source>
    </source>
</evidence>
<evidence type="ECO:0007829" key="9">
    <source>
        <dbReference type="PDB" id="4CAY"/>
    </source>
</evidence>
<organism>
    <name type="scientific">Homo sapiens</name>
    <name type="common">Human</name>
    <dbReference type="NCBI Taxonomy" id="9606"/>
    <lineage>
        <taxon>Eukaryota</taxon>
        <taxon>Metazoa</taxon>
        <taxon>Chordata</taxon>
        <taxon>Craniata</taxon>
        <taxon>Vertebrata</taxon>
        <taxon>Euteleostomi</taxon>
        <taxon>Mammalia</taxon>
        <taxon>Eutheria</taxon>
        <taxon>Euarchontoglires</taxon>
        <taxon>Primates</taxon>
        <taxon>Haplorrhini</taxon>
        <taxon>Catarrhini</taxon>
        <taxon>Hominidae</taxon>
        <taxon>Homo</taxon>
    </lineage>
</organism>
<comment type="function">
    <text evidence="4">Histone chaperone that specifically mediates the genome-wide removal of histone H2A.Z/H2AZ1 from the nucleosome: removes H2A.Z/H2AZ1 from its normal sites of deposition, especially from enhancer and insulator regions. Not involved in deposition of H2A.Z/H2AZ1 in the nucleosome. May stabilize the evicted H2A.Z/H2AZ1-H2B dimer, thus shifting the equilibrium towards dissociation and the off-chromatin state (PubMed:24463511). Inhibits activity of protein phosphatase 2A (PP2A). Does not inhibit protein phosphatase 1. May play a role in cerebellar development and synaptogenesis.</text>
</comment>
<comment type="subunit">
    <text evidence="1 4">Interacts with the importin alpha KPNA1 and KPNA2 (By similarity). Component of a SWR1-like complex, composed of EP400, KAT5/TIP60, TRRAP, BRD8, RUVBL1, RUVBL2, ING3 and ANP32E; the complex does not contain SRCAP. Interacts with H2A.Z/H2AZ1.</text>
</comment>
<comment type="interaction">
    <interactant intactId="EBI-2685059">
        <id>Q9BTT0</id>
    </interactant>
    <interactant intactId="EBI-399076">
        <id>Q9NV56</id>
        <label>MRGBP</label>
    </interactant>
    <organismsDiffer>false</organismsDiffer>
    <experiments>4</experiments>
</comment>
<comment type="subcellular location">
    <subcellularLocation>
        <location evidence="1">Cytoplasm</location>
    </subcellularLocation>
    <subcellularLocation>
        <location evidence="1">Nucleus</location>
    </subcellularLocation>
</comment>
<comment type="alternative products">
    <event type="alternative splicing"/>
    <isoform>
        <id>Q9BTT0-1</id>
        <name>1</name>
        <sequence type="displayed"/>
    </isoform>
    <isoform>
        <id>Q9BTT0-2</id>
        <name>2</name>
        <sequence type="described" ref="VSP_045618"/>
    </isoform>
    <isoform>
        <id>Q9BTT0-3</id>
        <name>3</name>
        <sequence type="described" ref="VSP_047262"/>
    </isoform>
</comment>
<comment type="tissue specificity">
    <text evidence="3">Expressed in peripheral blood leukocytes, colon, small intestine, prostate, thymus, spleen, skeletal muscle, liver and kidney.</text>
</comment>
<comment type="domain">
    <text evidence="4">The H2A.Z-interacting domain (ZID) mediates a direct interaction with H2A.Z/H2AZ1.</text>
</comment>
<comment type="PTM">
    <text evidence="1">Phosphorylated. The phosphorylation is nuclear localization signal (NLS)-dependent (By similarity).</text>
</comment>
<comment type="similarity">
    <text evidence="6">Belongs to the ANP32 family.</text>
</comment>
<dbReference type="EMBL" id="AY057381">
    <property type="protein sequence ID" value="AAL25814.1"/>
    <property type="molecule type" value="mRNA"/>
</dbReference>
<dbReference type="EMBL" id="AK095228">
    <property type="protein sequence ID" value="BAC04505.1"/>
    <property type="molecule type" value="mRNA"/>
</dbReference>
<dbReference type="EMBL" id="AK092672">
    <property type="protein sequence ID" value="BAC03942.1"/>
    <property type="molecule type" value="mRNA"/>
</dbReference>
<dbReference type="EMBL" id="AK303392">
    <property type="protein sequence ID" value="BAG64448.1"/>
    <property type="molecule type" value="mRNA"/>
</dbReference>
<dbReference type="EMBL" id="AL832674">
    <property type="status" value="NOT_ANNOTATED_CDS"/>
    <property type="molecule type" value="mRNA"/>
</dbReference>
<dbReference type="EMBL" id="AL138795">
    <property type="protein sequence ID" value="CAI22806.1"/>
    <property type="molecule type" value="Genomic_DNA"/>
</dbReference>
<dbReference type="EMBL" id="AL138795">
    <property type="protein sequence ID" value="CAI22808.1"/>
    <property type="molecule type" value="Genomic_DNA"/>
</dbReference>
<dbReference type="EMBL" id="CH471121">
    <property type="protein sequence ID" value="EAW53575.1"/>
    <property type="molecule type" value="Genomic_DNA"/>
</dbReference>
<dbReference type="EMBL" id="CH471121">
    <property type="protein sequence ID" value="EAW53577.1"/>
    <property type="molecule type" value="Genomic_DNA"/>
</dbReference>
<dbReference type="EMBL" id="BC003380">
    <property type="protein sequence ID" value="AAH03380.1"/>
    <property type="molecule type" value="mRNA"/>
</dbReference>
<dbReference type="CCDS" id="CCDS44214.1">
    <molecule id="Q9BTT0-2"/>
</dbReference>
<dbReference type="CCDS" id="CCDS44215.1">
    <molecule id="Q9BTT0-3"/>
</dbReference>
<dbReference type="CCDS" id="CCDS946.1">
    <molecule id="Q9BTT0-1"/>
</dbReference>
<dbReference type="RefSeq" id="NP_001129950.1">
    <molecule id="Q9BTT0-2"/>
    <property type="nucleotide sequence ID" value="NM_001136478.4"/>
</dbReference>
<dbReference type="RefSeq" id="NP_001129951.1">
    <molecule id="Q9BTT0-3"/>
    <property type="nucleotide sequence ID" value="NM_001136479.3"/>
</dbReference>
<dbReference type="RefSeq" id="NP_001267488.1">
    <property type="nucleotide sequence ID" value="NM_001280559.1"/>
</dbReference>
<dbReference type="RefSeq" id="NP_001267489.1">
    <property type="nucleotide sequence ID" value="NM_001280560.1"/>
</dbReference>
<dbReference type="RefSeq" id="NP_112182.1">
    <molecule id="Q9BTT0-1"/>
    <property type="nucleotide sequence ID" value="NM_030920.5"/>
</dbReference>
<dbReference type="PDB" id="4CAY">
    <property type="method" value="X-ray"/>
    <property type="resolution" value="1.48 A"/>
    <property type="chains" value="C=215-240"/>
</dbReference>
<dbReference type="PDB" id="4NFT">
    <property type="method" value="X-ray"/>
    <property type="resolution" value="2.61 A"/>
    <property type="chains" value="E/F=185-232"/>
</dbReference>
<dbReference type="PDBsum" id="4CAY"/>
<dbReference type="PDBsum" id="4NFT"/>
<dbReference type="SMR" id="Q9BTT0"/>
<dbReference type="BioGRID" id="123548">
    <property type="interactions" value="119"/>
</dbReference>
<dbReference type="CORUM" id="Q9BTT0"/>
<dbReference type="FunCoup" id="Q9BTT0">
    <property type="interactions" value="2854"/>
</dbReference>
<dbReference type="IntAct" id="Q9BTT0">
    <property type="interactions" value="67"/>
</dbReference>
<dbReference type="MINT" id="Q9BTT0"/>
<dbReference type="STRING" id="9606.ENSP00000463154"/>
<dbReference type="GlyGen" id="Q9BTT0">
    <property type="glycosylation" value="2 sites, 1 N-linked glycan (1 site), 1 O-linked glycan (1 site)"/>
</dbReference>
<dbReference type="iPTMnet" id="Q9BTT0"/>
<dbReference type="PhosphoSitePlus" id="Q9BTT0"/>
<dbReference type="BioMuta" id="ANP32E"/>
<dbReference type="DMDM" id="30580363"/>
<dbReference type="jPOST" id="Q9BTT0"/>
<dbReference type="MassIVE" id="Q9BTT0"/>
<dbReference type="PaxDb" id="9606-ENSP00000463154"/>
<dbReference type="PeptideAtlas" id="Q9BTT0"/>
<dbReference type="ProteomicsDB" id="19845"/>
<dbReference type="ProteomicsDB" id="64883"/>
<dbReference type="ProteomicsDB" id="79007">
    <molecule id="Q9BTT0-1"/>
</dbReference>
<dbReference type="Pumba" id="Q9BTT0"/>
<dbReference type="TopDownProteomics" id="Q9BTT0-1">
    <molecule id="Q9BTT0-1"/>
</dbReference>
<dbReference type="Antibodypedia" id="20276">
    <property type="antibodies" value="130 antibodies from 30 providers"/>
</dbReference>
<dbReference type="DNASU" id="81611"/>
<dbReference type="Ensembl" id="ENST00000436748.6">
    <molecule id="Q9BTT0-2"/>
    <property type="protein sequence ID" value="ENSP00000393718.2"/>
    <property type="gene ID" value="ENSG00000143401.15"/>
</dbReference>
<dbReference type="Ensembl" id="ENST00000583931.6">
    <molecule id="Q9BTT0-1"/>
    <property type="protein sequence ID" value="ENSP00000463154.1"/>
    <property type="gene ID" value="ENSG00000143401.15"/>
</dbReference>
<dbReference type="Ensembl" id="ENST00000616917.4">
    <molecule id="Q9BTT0-3"/>
    <property type="protein sequence ID" value="ENSP00000481415.1"/>
    <property type="gene ID" value="ENSG00000143401.15"/>
</dbReference>
<dbReference type="GeneID" id="81611"/>
<dbReference type="KEGG" id="hsa:81611"/>
<dbReference type="MANE-Select" id="ENST00000583931.6">
    <property type="protein sequence ID" value="ENSP00000463154.1"/>
    <property type="RefSeq nucleotide sequence ID" value="NM_030920.5"/>
    <property type="RefSeq protein sequence ID" value="NP_112182.1"/>
</dbReference>
<dbReference type="UCSC" id="uc031uxy.2">
    <molecule id="Q9BTT0-1"/>
    <property type="organism name" value="human"/>
</dbReference>
<dbReference type="AGR" id="HGNC:16673"/>
<dbReference type="CTD" id="81611"/>
<dbReference type="DisGeNET" id="81611"/>
<dbReference type="GeneCards" id="ANP32E"/>
<dbReference type="HGNC" id="HGNC:16673">
    <property type="gene designation" value="ANP32E"/>
</dbReference>
<dbReference type="HPA" id="ENSG00000143401">
    <property type="expression patterns" value="Low tissue specificity"/>
</dbReference>
<dbReference type="MIM" id="609611">
    <property type="type" value="gene"/>
</dbReference>
<dbReference type="neXtProt" id="NX_Q9BTT0"/>
<dbReference type="OpenTargets" id="ENSG00000143401"/>
<dbReference type="PharmGKB" id="PA134880751"/>
<dbReference type="VEuPathDB" id="HostDB:ENSG00000143401"/>
<dbReference type="eggNOG" id="KOG2739">
    <property type="taxonomic scope" value="Eukaryota"/>
</dbReference>
<dbReference type="GeneTree" id="ENSGT00950000182907"/>
<dbReference type="HOGENOM" id="CLU_063314_1_1_1"/>
<dbReference type="InParanoid" id="Q9BTT0"/>
<dbReference type="OMA" id="LDNCRCV"/>
<dbReference type="OrthoDB" id="2160613at2759"/>
<dbReference type="PAN-GO" id="Q9BTT0">
    <property type="GO annotations" value="5 GO annotations based on evolutionary models"/>
</dbReference>
<dbReference type="PhylomeDB" id="Q9BTT0"/>
<dbReference type="TreeFam" id="TF317206"/>
<dbReference type="PathwayCommons" id="Q9BTT0"/>
<dbReference type="SignaLink" id="Q9BTT0"/>
<dbReference type="BioGRID-ORCS" id="81611">
    <property type="hits" value="37 hits in 1162 CRISPR screens"/>
</dbReference>
<dbReference type="CD-CODE" id="91857CE7">
    <property type="entry name" value="Nucleolus"/>
</dbReference>
<dbReference type="CD-CODE" id="DEE660B4">
    <property type="entry name" value="Stress granule"/>
</dbReference>
<dbReference type="ChiTaRS" id="ANP32E">
    <property type="organism name" value="human"/>
</dbReference>
<dbReference type="EvolutionaryTrace" id="Q9BTT0"/>
<dbReference type="GeneWiki" id="ANP32E"/>
<dbReference type="GenomeRNAi" id="81611"/>
<dbReference type="Pharos" id="Q9BTT0">
    <property type="development level" value="Tbio"/>
</dbReference>
<dbReference type="PRO" id="PR:Q9BTT0"/>
<dbReference type="Proteomes" id="UP000005640">
    <property type="component" value="Chromosome 1"/>
</dbReference>
<dbReference type="RNAct" id="Q9BTT0">
    <property type="molecule type" value="protein"/>
</dbReference>
<dbReference type="Bgee" id="ENSG00000143401">
    <property type="expression patterns" value="Expressed in trabecular bone tissue and 212 other cell types or tissues"/>
</dbReference>
<dbReference type="ExpressionAtlas" id="Q9BTT0">
    <property type="expression patterns" value="baseline and differential"/>
</dbReference>
<dbReference type="GO" id="GO:0031410">
    <property type="term" value="C:cytoplasmic vesicle"/>
    <property type="evidence" value="ECO:0000250"/>
    <property type="project" value="UniProtKB"/>
</dbReference>
<dbReference type="GO" id="GO:0098978">
    <property type="term" value="C:glutamatergic synapse"/>
    <property type="evidence" value="ECO:0007669"/>
    <property type="project" value="Ensembl"/>
</dbReference>
<dbReference type="GO" id="GO:0005634">
    <property type="term" value="C:nucleus"/>
    <property type="evidence" value="ECO:0000314"/>
    <property type="project" value="LIFEdb"/>
</dbReference>
<dbReference type="GO" id="GO:0098839">
    <property type="term" value="C:postsynaptic density membrane"/>
    <property type="evidence" value="ECO:0007669"/>
    <property type="project" value="Ensembl"/>
</dbReference>
<dbReference type="GO" id="GO:0098895">
    <property type="term" value="C:postsynaptic endosome membrane"/>
    <property type="evidence" value="ECO:0007669"/>
    <property type="project" value="Ensembl"/>
</dbReference>
<dbReference type="GO" id="GO:0000812">
    <property type="term" value="C:Swr1 complex"/>
    <property type="evidence" value="ECO:0000314"/>
    <property type="project" value="UniProtKB"/>
</dbReference>
<dbReference type="GO" id="GO:0030672">
    <property type="term" value="C:synaptic vesicle membrane"/>
    <property type="evidence" value="ECO:0007669"/>
    <property type="project" value="Ensembl"/>
</dbReference>
<dbReference type="GO" id="GO:0042393">
    <property type="term" value="F:histone binding"/>
    <property type="evidence" value="ECO:0000314"/>
    <property type="project" value="UniProtKB"/>
</dbReference>
<dbReference type="GO" id="GO:0140713">
    <property type="term" value="F:histone chaperone activity"/>
    <property type="evidence" value="ECO:0000314"/>
    <property type="project" value="UniProtKB"/>
</dbReference>
<dbReference type="GO" id="GO:0019212">
    <property type="term" value="F:phosphatase inhibitor activity"/>
    <property type="evidence" value="ECO:0000250"/>
    <property type="project" value="UniProtKB"/>
</dbReference>
<dbReference type="GO" id="GO:0044183">
    <property type="term" value="F:protein folding chaperone"/>
    <property type="evidence" value="ECO:0000269"/>
    <property type="project" value="DisProt"/>
</dbReference>
<dbReference type="GO" id="GO:0006325">
    <property type="term" value="P:chromatin organization"/>
    <property type="evidence" value="ECO:0007669"/>
    <property type="project" value="UniProtKB-KW"/>
</dbReference>
<dbReference type="GO" id="GO:0042981">
    <property type="term" value="P:regulation of apoptotic process"/>
    <property type="evidence" value="ECO:0000318"/>
    <property type="project" value="GO_Central"/>
</dbReference>
<dbReference type="DisProt" id="DP02409"/>
<dbReference type="FunFam" id="3.80.10.10:FF:000003">
    <property type="entry name" value="Acidic leucine-rich nuclear phosphoprotein 32 family member A"/>
    <property type="match status" value="1"/>
</dbReference>
<dbReference type="Gene3D" id="3.80.10.10">
    <property type="entry name" value="Ribonuclease Inhibitor"/>
    <property type="match status" value="1"/>
</dbReference>
<dbReference type="InterPro" id="IPR045081">
    <property type="entry name" value="AN32"/>
</dbReference>
<dbReference type="InterPro" id="IPR001611">
    <property type="entry name" value="Leu-rich_rpt"/>
</dbReference>
<dbReference type="InterPro" id="IPR032675">
    <property type="entry name" value="LRR_dom_sf"/>
</dbReference>
<dbReference type="PANTHER" id="PTHR11375">
    <property type="entry name" value="ACIDIC LEUCINE-RICH NUCLEAR PHOSPHOPROTEIN 32"/>
    <property type="match status" value="1"/>
</dbReference>
<dbReference type="PANTHER" id="PTHR11375:SF5">
    <property type="entry name" value="ACIDIC LEUCINE-RICH NUCLEAR PHOSPHOPROTEIN 32 FAMILY MEMBER E"/>
    <property type="match status" value="1"/>
</dbReference>
<dbReference type="Pfam" id="PF14580">
    <property type="entry name" value="LRR_9"/>
    <property type="match status" value="1"/>
</dbReference>
<dbReference type="SUPFAM" id="SSF52058">
    <property type="entry name" value="L domain-like"/>
    <property type="match status" value="1"/>
</dbReference>
<dbReference type="PROSITE" id="PS51450">
    <property type="entry name" value="LRR"/>
    <property type="match status" value="4"/>
</dbReference>
<gene>
    <name type="primary">ANP32E</name>
</gene>
<feature type="chain" id="PRO_0000137599" description="Acidic leucine-rich nuclear phosphoprotein 32 family member E">
    <location>
        <begin position="1"/>
        <end position="268"/>
    </location>
</feature>
<feature type="repeat" description="LRR 1">
    <location>
        <begin position="18"/>
        <end position="38"/>
    </location>
</feature>
<feature type="repeat" description="LRR 2">
    <location>
        <begin position="43"/>
        <end position="64"/>
    </location>
</feature>
<feature type="repeat" description="LRR 3">
    <location>
        <begin position="65"/>
        <end position="87"/>
    </location>
</feature>
<feature type="repeat" description="LRR 4">
    <location>
        <begin position="89"/>
        <end position="110"/>
    </location>
</feature>
<feature type="domain" description="LRRCT">
    <location>
        <begin position="123"/>
        <end position="161"/>
    </location>
</feature>
<feature type="region of interest" description="Disordered" evidence="2">
    <location>
        <begin position="149"/>
        <end position="268"/>
    </location>
</feature>
<feature type="region of interest" description="ZID domain">
    <location>
        <begin position="215"/>
        <end position="268"/>
    </location>
</feature>
<feature type="compositionally biased region" description="Acidic residues" evidence="2">
    <location>
        <begin position="149"/>
        <end position="216"/>
    </location>
</feature>
<feature type="compositionally biased region" description="Acidic residues" evidence="2">
    <location>
        <begin position="226"/>
        <end position="247"/>
    </location>
</feature>
<feature type="compositionally biased region" description="Basic and acidic residues" evidence="2">
    <location>
        <begin position="248"/>
        <end position="259"/>
    </location>
</feature>
<feature type="modified residue" description="N-acetylmethionine" evidence="7">
    <location>
        <position position="1"/>
    </location>
</feature>
<feature type="cross-link" description="Glycyl lysine isopeptide (Lys-Gly) (interchain with G-Cter in SUMO2)" evidence="8">
    <location>
        <position position="68"/>
    </location>
</feature>
<feature type="splice variant" id="VSP_047262" description="In isoform 3." evidence="6">
    <location>
        <begin position="1"/>
        <end position="48"/>
    </location>
</feature>
<feature type="splice variant" id="VSP_045618" description="In isoform 2." evidence="5">
    <location>
        <begin position="69"/>
        <end position="109"/>
    </location>
</feature>
<feature type="mutagenesis site" description="In ANP32E-m1; abolished ability to interact with the H2A.Z/H2AZ1-H2B dimer." evidence="4">
    <original>LSYLM</original>
    <variation>ASYAA</variation>
    <location>
        <begin position="218"/>
        <end position="222"/>
    </location>
</feature>
<feature type="mutagenesis site" description="In ANP32E-m2; abolished ability to interact with the H2A.Z/H2AZ1-H2B dimer." evidence="4">
    <original>DDDY</original>
    <variation>ADAA</variation>
    <location>
        <begin position="232"/>
        <end position="235"/>
    </location>
</feature>
<feature type="sequence conflict" description="In Ref. 1; AAL25814 and 2; BAC04505/BAG64448." evidence="6" ref="1 2">
    <location>
        <begin position="185"/>
        <end position="186"/>
    </location>
</feature>
<feature type="helix" evidence="9">
    <location>
        <begin position="218"/>
        <end position="222"/>
    </location>
</feature>
<feature type="strand" evidence="9">
    <location>
        <begin position="223"/>
        <end position="225"/>
    </location>
</feature>
<accession>Q9BTT0</accession>
<accession>B4E0I6</accession>
<accession>E9PEA6</accession>
<accession>Q5TB18</accession>
<accession>Q5TB20</accession>
<accession>Q8N1S4</accession>
<accession>Q8WWW9</accession>
<name>AN32E_HUMAN</name>
<keyword id="KW-0002">3D-structure</keyword>
<keyword id="KW-0007">Acetylation</keyword>
<keyword id="KW-0025">Alternative splicing</keyword>
<keyword id="KW-0143">Chaperone</keyword>
<keyword id="KW-0156">Chromatin regulator</keyword>
<keyword id="KW-0963">Cytoplasm</keyword>
<keyword id="KW-1017">Isopeptide bond</keyword>
<keyword id="KW-0433">Leucine-rich repeat</keyword>
<keyword id="KW-0539">Nucleus</keyword>
<keyword id="KW-0597">Phosphoprotein</keyword>
<keyword id="KW-1267">Proteomics identification</keyword>
<keyword id="KW-1185">Reference proteome</keyword>
<keyword id="KW-0677">Repeat</keyword>
<keyword id="KW-0832">Ubl conjugation</keyword>
<proteinExistence type="evidence at protein level"/>
<sequence>MEMKKKINLELRNRSPEEVTELVLDNCLCVNGEIEGLNDTFKELEFLSMANVELSSLARLPSLNKLRKLELSDNIISGGLEVLAEKCPNLTYLNLSGNKIKDLSTVEALQNLKNLKSLDLFNCEITNLEDYRESIFELLQQITYLDGFDQEDNEAPDSEEEDDEDGDEDDEEEEENEAGPPEGYEEEEEEEEEEDEDEDEDEDEAGSELGEGEEEVGLSYLMKEEIQDEEDDDDYVEEGEEEEEEEEGGLRGEKRKRDAEDDGEEEDD</sequence>
<reference key="1">
    <citation type="journal article" date="2002" name="Cytogenet. Genome Res.">
        <title>Molecular cloning and characterization of a novel human gene (ANP32E alias LANPL) from human fetal brain.</title>
        <authorList>
            <person name="Jiang M."/>
            <person name="Ma Y."/>
            <person name="Ni X."/>
            <person name="Cao G."/>
            <person name="Ji C."/>
            <person name="Cheng H."/>
            <person name="Tang R."/>
            <person name="Xie Y."/>
            <person name="Mao Y."/>
        </authorList>
    </citation>
    <scope>NUCLEOTIDE SEQUENCE [MRNA] (ISOFORM 1)</scope>
    <scope>TISSUE SPECIFICITY</scope>
    <source>
        <tissue>Fetal brain</tissue>
    </source>
</reference>
<reference key="2">
    <citation type="journal article" date="2004" name="Nat. Genet.">
        <title>Complete sequencing and characterization of 21,243 full-length human cDNAs.</title>
        <authorList>
            <person name="Ota T."/>
            <person name="Suzuki Y."/>
            <person name="Nishikawa T."/>
            <person name="Otsuki T."/>
            <person name="Sugiyama T."/>
            <person name="Irie R."/>
            <person name="Wakamatsu A."/>
            <person name="Hayashi K."/>
            <person name="Sato H."/>
            <person name="Nagai K."/>
            <person name="Kimura K."/>
            <person name="Makita H."/>
            <person name="Sekine M."/>
            <person name="Obayashi M."/>
            <person name="Nishi T."/>
            <person name="Shibahara T."/>
            <person name="Tanaka T."/>
            <person name="Ishii S."/>
            <person name="Yamamoto J."/>
            <person name="Saito K."/>
            <person name="Kawai Y."/>
            <person name="Isono Y."/>
            <person name="Nakamura Y."/>
            <person name="Nagahari K."/>
            <person name="Murakami K."/>
            <person name="Yasuda T."/>
            <person name="Iwayanagi T."/>
            <person name="Wagatsuma M."/>
            <person name="Shiratori A."/>
            <person name="Sudo H."/>
            <person name="Hosoiri T."/>
            <person name="Kaku Y."/>
            <person name="Kodaira H."/>
            <person name="Kondo H."/>
            <person name="Sugawara M."/>
            <person name="Takahashi M."/>
            <person name="Kanda K."/>
            <person name="Yokoi T."/>
            <person name="Furuya T."/>
            <person name="Kikkawa E."/>
            <person name="Omura Y."/>
            <person name="Abe K."/>
            <person name="Kamihara K."/>
            <person name="Katsuta N."/>
            <person name="Sato K."/>
            <person name="Tanikawa M."/>
            <person name="Yamazaki M."/>
            <person name="Ninomiya K."/>
            <person name="Ishibashi T."/>
            <person name="Yamashita H."/>
            <person name="Murakawa K."/>
            <person name="Fujimori K."/>
            <person name="Tanai H."/>
            <person name="Kimata M."/>
            <person name="Watanabe M."/>
            <person name="Hiraoka S."/>
            <person name="Chiba Y."/>
            <person name="Ishida S."/>
            <person name="Ono Y."/>
            <person name="Takiguchi S."/>
            <person name="Watanabe S."/>
            <person name="Yosida M."/>
            <person name="Hotuta T."/>
            <person name="Kusano J."/>
            <person name="Kanehori K."/>
            <person name="Takahashi-Fujii A."/>
            <person name="Hara H."/>
            <person name="Tanase T.-O."/>
            <person name="Nomura Y."/>
            <person name="Togiya S."/>
            <person name="Komai F."/>
            <person name="Hara R."/>
            <person name="Takeuchi K."/>
            <person name="Arita M."/>
            <person name="Imose N."/>
            <person name="Musashino K."/>
            <person name="Yuuki H."/>
            <person name="Oshima A."/>
            <person name="Sasaki N."/>
            <person name="Aotsuka S."/>
            <person name="Yoshikawa Y."/>
            <person name="Matsunawa H."/>
            <person name="Ichihara T."/>
            <person name="Shiohata N."/>
            <person name="Sano S."/>
            <person name="Moriya S."/>
            <person name="Momiyama H."/>
            <person name="Satoh N."/>
            <person name="Takami S."/>
            <person name="Terashima Y."/>
            <person name="Suzuki O."/>
            <person name="Nakagawa S."/>
            <person name="Senoh A."/>
            <person name="Mizoguchi H."/>
            <person name="Goto Y."/>
            <person name="Shimizu F."/>
            <person name="Wakebe H."/>
            <person name="Hishigaki H."/>
            <person name="Watanabe T."/>
            <person name="Sugiyama A."/>
            <person name="Takemoto M."/>
            <person name="Kawakami B."/>
            <person name="Yamazaki M."/>
            <person name="Watanabe K."/>
            <person name="Kumagai A."/>
            <person name="Itakura S."/>
            <person name="Fukuzumi Y."/>
            <person name="Fujimori Y."/>
            <person name="Komiyama M."/>
            <person name="Tashiro H."/>
            <person name="Tanigami A."/>
            <person name="Fujiwara T."/>
            <person name="Ono T."/>
            <person name="Yamada K."/>
            <person name="Fujii Y."/>
            <person name="Ozaki K."/>
            <person name="Hirao M."/>
            <person name="Ohmori Y."/>
            <person name="Kawabata A."/>
            <person name="Hikiji T."/>
            <person name="Kobatake N."/>
            <person name="Inagaki H."/>
            <person name="Ikema Y."/>
            <person name="Okamoto S."/>
            <person name="Okitani R."/>
            <person name="Kawakami T."/>
            <person name="Noguchi S."/>
            <person name="Itoh T."/>
            <person name="Shigeta K."/>
            <person name="Senba T."/>
            <person name="Matsumura K."/>
            <person name="Nakajima Y."/>
            <person name="Mizuno T."/>
            <person name="Morinaga M."/>
            <person name="Sasaki M."/>
            <person name="Togashi T."/>
            <person name="Oyama M."/>
            <person name="Hata H."/>
            <person name="Watanabe M."/>
            <person name="Komatsu T."/>
            <person name="Mizushima-Sugano J."/>
            <person name="Satoh T."/>
            <person name="Shirai Y."/>
            <person name="Takahashi Y."/>
            <person name="Nakagawa K."/>
            <person name="Okumura K."/>
            <person name="Nagase T."/>
            <person name="Nomura N."/>
            <person name="Kikuchi H."/>
            <person name="Masuho Y."/>
            <person name="Yamashita R."/>
            <person name="Nakai K."/>
            <person name="Yada T."/>
            <person name="Nakamura Y."/>
            <person name="Ohara O."/>
            <person name="Isogai T."/>
            <person name="Sugano S."/>
        </authorList>
    </citation>
    <scope>NUCLEOTIDE SEQUENCE [LARGE SCALE MRNA] (ISOFORMS 1 AND 2)</scope>
    <source>
        <tissue>Pulmonary artery</tissue>
        <tissue>Thymus</tissue>
        <tissue>Tongue</tissue>
    </source>
</reference>
<reference key="3">
    <citation type="journal article" date="2007" name="BMC Genomics">
        <title>The full-ORF clone resource of the German cDNA consortium.</title>
        <authorList>
            <person name="Bechtel S."/>
            <person name="Rosenfelder H."/>
            <person name="Duda A."/>
            <person name="Schmidt C.P."/>
            <person name="Ernst U."/>
            <person name="Wellenreuther R."/>
            <person name="Mehrle A."/>
            <person name="Schuster C."/>
            <person name="Bahr A."/>
            <person name="Bloecker H."/>
            <person name="Heubner D."/>
            <person name="Hoerlein A."/>
            <person name="Michel G."/>
            <person name="Wedler H."/>
            <person name="Koehrer K."/>
            <person name="Ottenwaelder B."/>
            <person name="Poustka A."/>
            <person name="Wiemann S."/>
            <person name="Schupp I."/>
        </authorList>
    </citation>
    <scope>NUCLEOTIDE SEQUENCE [LARGE SCALE MRNA] (ISOFORM 1)</scope>
    <source>
        <tissue>Adipose tissue</tissue>
    </source>
</reference>
<reference key="4">
    <citation type="journal article" date="2006" name="Nature">
        <title>The DNA sequence and biological annotation of human chromosome 1.</title>
        <authorList>
            <person name="Gregory S.G."/>
            <person name="Barlow K.F."/>
            <person name="McLay K.E."/>
            <person name="Kaul R."/>
            <person name="Swarbreck D."/>
            <person name="Dunham A."/>
            <person name="Scott C.E."/>
            <person name="Howe K.L."/>
            <person name="Woodfine K."/>
            <person name="Spencer C.C.A."/>
            <person name="Jones M.C."/>
            <person name="Gillson C."/>
            <person name="Searle S."/>
            <person name="Zhou Y."/>
            <person name="Kokocinski F."/>
            <person name="McDonald L."/>
            <person name="Evans R."/>
            <person name="Phillips K."/>
            <person name="Atkinson A."/>
            <person name="Cooper R."/>
            <person name="Jones C."/>
            <person name="Hall R.E."/>
            <person name="Andrews T.D."/>
            <person name="Lloyd C."/>
            <person name="Ainscough R."/>
            <person name="Almeida J.P."/>
            <person name="Ambrose K.D."/>
            <person name="Anderson F."/>
            <person name="Andrew R.W."/>
            <person name="Ashwell R.I.S."/>
            <person name="Aubin K."/>
            <person name="Babbage A.K."/>
            <person name="Bagguley C.L."/>
            <person name="Bailey J."/>
            <person name="Beasley H."/>
            <person name="Bethel G."/>
            <person name="Bird C.P."/>
            <person name="Bray-Allen S."/>
            <person name="Brown J.Y."/>
            <person name="Brown A.J."/>
            <person name="Buckley D."/>
            <person name="Burton J."/>
            <person name="Bye J."/>
            <person name="Carder C."/>
            <person name="Chapman J.C."/>
            <person name="Clark S.Y."/>
            <person name="Clarke G."/>
            <person name="Clee C."/>
            <person name="Cobley V."/>
            <person name="Collier R.E."/>
            <person name="Corby N."/>
            <person name="Coville G.J."/>
            <person name="Davies J."/>
            <person name="Deadman R."/>
            <person name="Dunn M."/>
            <person name="Earthrowl M."/>
            <person name="Ellington A.G."/>
            <person name="Errington H."/>
            <person name="Frankish A."/>
            <person name="Frankland J."/>
            <person name="French L."/>
            <person name="Garner P."/>
            <person name="Garnett J."/>
            <person name="Gay L."/>
            <person name="Ghori M.R.J."/>
            <person name="Gibson R."/>
            <person name="Gilby L.M."/>
            <person name="Gillett W."/>
            <person name="Glithero R.J."/>
            <person name="Grafham D.V."/>
            <person name="Griffiths C."/>
            <person name="Griffiths-Jones S."/>
            <person name="Grocock R."/>
            <person name="Hammond S."/>
            <person name="Harrison E.S.I."/>
            <person name="Hart E."/>
            <person name="Haugen E."/>
            <person name="Heath P.D."/>
            <person name="Holmes S."/>
            <person name="Holt K."/>
            <person name="Howden P.J."/>
            <person name="Hunt A.R."/>
            <person name="Hunt S.E."/>
            <person name="Hunter G."/>
            <person name="Isherwood J."/>
            <person name="James R."/>
            <person name="Johnson C."/>
            <person name="Johnson D."/>
            <person name="Joy A."/>
            <person name="Kay M."/>
            <person name="Kershaw J.K."/>
            <person name="Kibukawa M."/>
            <person name="Kimberley A.M."/>
            <person name="King A."/>
            <person name="Knights A.J."/>
            <person name="Lad H."/>
            <person name="Laird G."/>
            <person name="Lawlor S."/>
            <person name="Leongamornlert D.A."/>
            <person name="Lloyd D.M."/>
            <person name="Loveland J."/>
            <person name="Lovell J."/>
            <person name="Lush M.J."/>
            <person name="Lyne R."/>
            <person name="Martin S."/>
            <person name="Mashreghi-Mohammadi M."/>
            <person name="Matthews L."/>
            <person name="Matthews N.S.W."/>
            <person name="McLaren S."/>
            <person name="Milne S."/>
            <person name="Mistry S."/>
            <person name="Moore M.J.F."/>
            <person name="Nickerson T."/>
            <person name="O'Dell C.N."/>
            <person name="Oliver K."/>
            <person name="Palmeiri A."/>
            <person name="Palmer S.A."/>
            <person name="Parker A."/>
            <person name="Patel D."/>
            <person name="Pearce A.V."/>
            <person name="Peck A.I."/>
            <person name="Pelan S."/>
            <person name="Phelps K."/>
            <person name="Phillimore B.J."/>
            <person name="Plumb R."/>
            <person name="Rajan J."/>
            <person name="Raymond C."/>
            <person name="Rouse G."/>
            <person name="Saenphimmachak C."/>
            <person name="Sehra H.K."/>
            <person name="Sheridan E."/>
            <person name="Shownkeen R."/>
            <person name="Sims S."/>
            <person name="Skuce C.D."/>
            <person name="Smith M."/>
            <person name="Steward C."/>
            <person name="Subramanian S."/>
            <person name="Sycamore N."/>
            <person name="Tracey A."/>
            <person name="Tromans A."/>
            <person name="Van Helmond Z."/>
            <person name="Wall M."/>
            <person name="Wallis J.M."/>
            <person name="White S."/>
            <person name="Whitehead S.L."/>
            <person name="Wilkinson J.E."/>
            <person name="Willey D.L."/>
            <person name="Williams H."/>
            <person name="Wilming L."/>
            <person name="Wray P.W."/>
            <person name="Wu Z."/>
            <person name="Coulson A."/>
            <person name="Vaudin M."/>
            <person name="Sulston J.E."/>
            <person name="Durbin R.M."/>
            <person name="Hubbard T."/>
            <person name="Wooster R."/>
            <person name="Dunham I."/>
            <person name="Carter N.P."/>
            <person name="McVean G."/>
            <person name="Ross M.T."/>
            <person name="Harrow J."/>
            <person name="Olson M.V."/>
            <person name="Beck S."/>
            <person name="Rogers J."/>
            <person name="Bentley D.R."/>
        </authorList>
    </citation>
    <scope>NUCLEOTIDE SEQUENCE [LARGE SCALE GENOMIC DNA]</scope>
</reference>
<reference key="5">
    <citation type="submission" date="2005-09" db="EMBL/GenBank/DDBJ databases">
        <authorList>
            <person name="Mural R.J."/>
            <person name="Istrail S."/>
            <person name="Sutton G.G."/>
            <person name="Florea L."/>
            <person name="Halpern A.L."/>
            <person name="Mobarry C.M."/>
            <person name="Lippert R."/>
            <person name="Walenz B."/>
            <person name="Shatkay H."/>
            <person name="Dew I."/>
            <person name="Miller J.R."/>
            <person name="Flanigan M.J."/>
            <person name="Edwards N.J."/>
            <person name="Bolanos R."/>
            <person name="Fasulo D."/>
            <person name="Halldorsson B.V."/>
            <person name="Hannenhalli S."/>
            <person name="Turner R."/>
            <person name="Yooseph S."/>
            <person name="Lu F."/>
            <person name="Nusskern D.R."/>
            <person name="Shue B.C."/>
            <person name="Zheng X.H."/>
            <person name="Zhong F."/>
            <person name="Delcher A.L."/>
            <person name="Huson D.H."/>
            <person name="Kravitz S.A."/>
            <person name="Mouchard L."/>
            <person name="Reinert K."/>
            <person name="Remington K.A."/>
            <person name="Clark A.G."/>
            <person name="Waterman M.S."/>
            <person name="Eichler E.E."/>
            <person name="Adams M.D."/>
            <person name="Hunkapiller M.W."/>
            <person name="Myers E.W."/>
            <person name="Venter J.C."/>
        </authorList>
    </citation>
    <scope>NUCLEOTIDE SEQUENCE [LARGE SCALE GENOMIC DNA]</scope>
</reference>
<reference key="6">
    <citation type="journal article" date="2004" name="Genome Res.">
        <title>The status, quality, and expansion of the NIH full-length cDNA project: the Mammalian Gene Collection (MGC).</title>
        <authorList>
            <consortium name="The MGC Project Team"/>
        </authorList>
    </citation>
    <scope>NUCLEOTIDE SEQUENCE [LARGE SCALE MRNA] (ISOFORM 1)</scope>
    <source>
        <tissue>Cervix</tissue>
    </source>
</reference>
<reference key="7">
    <citation type="journal article" date="2011" name="BMC Syst. Biol.">
        <title>Initial characterization of the human central proteome.</title>
        <authorList>
            <person name="Burkard T.R."/>
            <person name="Planyavsky M."/>
            <person name="Kaupe I."/>
            <person name="Breitwieser F.P."/>
            <person name="Buerckstuemmer T."/>
            <person name="Bennett K.L."/>
            <person name="Superti-Furga G."/>
            <person name="Colinge J."/>
        </authorList>
    </citation>
    <scope>IDENTIFICATION BY MASS SPECTROMETRY [LARGE SCALE ANALYSIS]</scope>
</reference>
<reference key="8">
    <citation type="journal article" date="2012" name="Proc. Natl. Acad. Sci. U.S.A.">
        <title>N-terminal acetylome analyses and functional insights of the N-terminal acetyltransferase NatB.</title>
        <authorList>
            <person name="Van Damme P."/>
            <person name="Lasa M."/>
            <person name="Polevoda B."/>
            <person name="Gazquez C."/>
            <person name="Elosegui-Artola A."/>
            <person name="Kim D.S."/>
            <person name="De Juan-Pardo E."/>
            <person name="Demeyer K."/>
            <person name="Hole K."/>
            <person name="Larrea E."/>
            <person name="Timmerman E."/>
            <person name="Prieto J."/>
            <person name="Arnesen T."/>
            <person name="Sherman F."/>
            <person name="Gevaert K."/>
            <person name="Aldabe R."/>
        </authorList>
    </citation>
    <scope>ACETYLATION [LARGE SCALE ANALYSIS] AT MET-1</scope>
    <scope>IDENTIFICATION BY MASS SPECTROMETRY [LARGE SCALE ANALYSIS]</scope>
</reference>
<reference key="9">
    <citation type="journal article" date="2014" name="J. Proteomics">
        <title>An enzyme assisted RP-RPLC approach for in-depth analysis of human liver phosphoproteome.</title>
        <authorList>
            <person name="Bian Y."/>
            <person name="Song C."/>
            <person name="Cheng K."/>
            <person name="Dong M."/>
            <person name="Wang F."/>
            <person name="Huang J."/>
            <person name="Sun D."/>
            <person name="Wang L."/>
            <person name="Ye M."/>
            <person name="Zou H."/>
        </authorList>
    </citation>
    <scope>IDENTIFICATION BY MASS SPECTROMETRY [LARGE SCALE ANALYSIS]</scope>
    <source>
        <tissue>Liver</tissue>
    </source>
</reference>
<reference key="10">
    <citation type="journal article" date="2015" name="Proteomics">
        <title>N-terminome analysis of the human mitochondrial proteome.</title>
        <authorList>
            <person name="Vaca Jacome A.S."/>
            <person name="Rabilloud T."/>
            <person name="Schaeffer-Reiss C."/>
            <person name="Rompais M."/>
            <person name="Ayoub D."/>
            <person name="Lane L."/>
            <person name="Bairoch A."/>
            <person name="Van Dorsselaer A."/>
            <person name="Carapito C."/>
        </authorList>
    </citation>
    <scope>IDENTIFICATION BY MASS SPECTROMETRY [LARGE SCALE ANALYSIS]</scope>
</reference>
<reference key="11">
    <citation type="journal article" date="2017" name="Nat. Struct. Mol. Biol.">
        <title>Site-specific mapping of the human SUMO proteome reveals co-modification with phosphorylation.</title>
        <authorList>
            <person name="Hendriks I.A."/>
            <person name="Lyon D."/>
            <person name="Young C."/>
            <person name="Jensen L.J."/>
            <person name="Vertegaal A.C."/>
            <person name="Nielsen M.L."/>
        </authorList>
    </citation>
    <scope>SUMOYLATION [LARGE SCALE ANALYSIS] AT LYS-68</scope>
    <scope>IDENTIFICATION BY MASS SPECTROMETRY [LARGE SCALE ANALYSIS]</scope>
</reference>
<reference key="12">
    <citation type="journal article" date="2014" name="Nature">
        <title>ANP32E is a histone chaperone that removes H2A.Z from chromatin.</title>
        <authorList>
            <person name="Obri A."/>
            <person name="Ouararhni K."/>
            <person name="Papin C."/>
            <person name="Diebold M.L."/>
            <person name="Padmanabhan K."/>
            <person name="Marek M."/>
            <person name="Stoll I."/>
            <person name="Roy L."/>
            <person name="Reilly P.T."/>
            <person name="Mak T.W."/>
            <person name="Dimitrov S."/>
            <person name="Romier C."/>
            <person name="Hamiche A."/>
        </authorList>
    </citation>
    <scope>X-RAY CRYSTALLOGRAPHY (1.48 ANGSTROMS) OF 215-240 IN COMPLEX WITH HISTONES H2AZ1 AND H2B</scope>
    <scope>FUNCTION</scope>
    <scope>IDENTIFICATION IN THE SWR1-LIKE COMPLEX</scope>
    <scope>INTERACTION WITH H2AZ1</scope>
    <scope>MUTAGENESIS OF 218-LEU--MET-222 AND 232-ASP--TYR-235</scope>
</reference>
<protein>
    <recommendedName>
        <fullName>Acidic leucine-rich nuclear phosphoprotein 32 family member E</fullName>
    </recommendedName>
    <alternativeName>
        <fullName>LANP-like protein</fullName>
        <shortName>LANP-L</shortName>
    </alternativeName>
</protein>